<name>PTH_POLAQ</name>
<evidence type="ECO:0000255" key="1">
    <source>
        <dbReference type="HAMAP-Rule" id="MF_00083"/>
    </source>
</evidence>
<dbReference type="EC" id="3.1.1.29" evidence="1"/>
<dbReference type="EMBL" id="CP000655">
    <property type="protein sequence ID" value="ABP35134.1"/>
    <property type="molecule type" value="Genomic_DNA"/>
</dbReference>
<dbReference type="RefSeq" id="WP_011903757.1">
    <property type="nucleotide sequence ID" value="NC_009379.1"/>
</dbReference>
<dbReference type="SMR" id="A4T070"/>
<dbReference type="GeneID" id="31482313"/>
<dbReference type="KEGG" id="pnu:Pnuc_1922"/>
<dbReference type="eggNOG" id="COG0193">
    <property type="taxonomic scope" value="Bacteria"/>
</dbReference>
<dbReference type="HOGENOM" id="CLU_062456_3_1_4"/>
<dbReference type="Proteomes" id="UP000000231">
    <property type="component" value="Chromosome"/>
</dbReference>
<dbReference type="GO" id="GO:0005737">
    <property type="term" value="C:cytoplasm"/>
    <property type="evidence" value="ECO:0007669"/>
    <property type="project" value="UniProtKB-SubCell"/>
</dbReference>
<dbReference type="GO" id="GO:0004045">
    <property type="term" value="F:peptidyl-tRNA hydrolase activity"/>
    <property type="evidence" value="ECO:0007669"/>
    <property type="project" value="UniProtKB-UniRule"/>
</dbReference>
<dbReference type="GO" id="GO:0000049">
    <property type="term" value="F:tRNA binding"/>
    <property type="evidence" value="ECO:0007669"/>
    <property type="project" value="UniProtKB-UniRule"/>
</dbReference>
<dbReference type="GO" id="GO:0006515">
    <property type="term" value="P:protein quality control for misfolded or incompletely synthesized proteins"/>
    <property type="evidence" value="ECO:0007669"/>
    <property type="project" value="UniProtKB-UniRule"/>
</dbReference>
<dbReference type="GO" id="GO:0072344">
    <property type="term" value="P:rescue of stalled ribosome"/>
    <property type="evidence" value="ECO:0007669"/>
    <property type="project" value="UniProtKB-UniRule"/>
</dbReference>
<dbReference type="CDD" id="cd00462">
    <property type="entry name" value="PTH"/>
    <property type="match status" value="1"/>
</dbReference>
<dbReference type="FunFam" id="3.40.50.1470:FF:000001">
    <property type="entry name" value="Peptidyl-tRNA hydrolase"/>
    <property type="match status" value="1"/>
</dbReference>
<dbReference type="Gene3D" id="3.40.50.1470">
    <property type="entry name" value="Peptidyl-tRNA hydrolase"/>
    <property type="match status" value="1"/>
</dbReference>
<dbReference type="HAMAP" id="MF_00083">
    <property type="entry name" value="Pept_tRNA_hydro_bact"/>
    <property type="match status" value="1"/>
</dbReference>
<dbReference type="InterPro" id="IPR001328">
    <property type="entry name" value="Pept_tRNA_hydro"/>
</dbReference>
<dbReference type="InterPro" id="IPR018171">
    <property type="entry name" value="Pept_tRNA_hydro_CS"/>
</dbReference>
<dbReference type="InterPro" id="IPR036416">
    <property type="entry name" value="Pept_tRNA_hydro_sf"/>
</dbReference>
<dbReference type="NCBIfam" id="TIGR00447">
    <property type="entry name" value="pth"/>
    <property type="match status" value="1"/>
</dbReference>
<dbReference type="PANTHER" id="PTHR17224">
    <property type="entry name" value="PEPTIDYL-TRNA HYDROLASE"/>
    <property type="match status" value="1"/>
</dbReference>
<dbReference type="PANTHER" id="PTHR17224:SF1">
    <property type="entry name" value="PEPTIDYL-TRNA HYDROLASE"/>
    <property type="match status" value="1"/>
</dbReference>
<dbReference type="Pfam" id="PF01195">
    <property type="entry name" value="Pept_tRNA_hydro"/>
    <property type="match status" value="1"/>
</dbReference>
<dbReference type="SUPFAM" id="SSF53178">
    <property type="entry name" value="Peptidyl-tRNA hydrolase-like"/>
    <property type="match status" value="1"/>
</dbReference>
<dbReference type="PROSITE" id="PS01196">
    <property type="entry name" value="PEPT_TRNA_HYDROL_2"/>
    <property type="match status" value="1"/>
</dbReference>
<organism>
    <name type="scientific">Polynucleobacter asymbioticus (strain DSM 18221 / CIP 109841 / QLW-P1DMWA-1)</name>
    <name type="common">Polynucleobacter necessarius subsp. asymbioticus</name>
    <dbReference type="NCBI Taxonomy" id="312153"/>
    <lineage>
        <taxon>Bacteria</taxon>
        <taxon>Pseudomonadati</taxon>
        <taxon>Pseudomonadota</taxon>
        <taxon>Betaproteobacteria</taxon>
        <taxon>Burkholderiales</taxon>
        <taxon>Burkholderiaceae</taxon>
        <taxon>Polynucleobacter</taxon>
    </lineage>
</organism>
<protein>
    <recommendedName>
        <fullName evidence="1">Peptidyl-tRNA hydrolase</fullName>
        <shortName evidence="1">Pth</shortName>
        <ecNumber evidence="1">3.1.1.29</ecNumber>
    </recommendedName>
</protein>
<reference key="1">
    <citation type="journal article" date="2012" name="Stand. Genomic Sci.">
        <title>Complete genome sequence of Polynucleobacter necessarius subsp. asymbioticus type strain (QLW-P1DMWA-1(T)).</title>
        <authorList>
            <person name="Meincke L."/>
            <person name="Copeland A."/>
            <person name="Lapidus A."/>
            <person name="Lucas S."/>
            <person name="Berry K.W."/>
            <person name="Del Rio T.G."/>
            <person name="Hammon N."/>
            <person name="Dalin E."/>
            <person name="Tice H."/>
            <person name="Pitluck S."/>
            <person name="Richardson P."/>
            <person name="Bruce D."/>
            <person name="Goodwin L."/>
            <person name="Han C."/>
            <person name="Tapia R."/>
            <person name="Detter J.C."/>
            <person name="Schmutz J."/>
            <person name="Brettin T."/>
            <person name="Larimer F."/>
            <person name="Land M."/>
            <person name="Hauser L."/>
            <person name="Kyrpides N.C."/>
            <person name="Ivanova N."/>
            <person name="Goker M."/>
            <person name="Woyke T."/>
            <person name="Wu Q.L."/>
            <person name="Pockl M."/>
            <person name="Hahn M.W."/>
            <person name="Klenk H.P."/>
        </authorList>
    </citation>
    <scope>NUCLEOTIDE SEQUENCE [LARGE SCALE GENOMIC DNA]</scope>
    <source>
        <strain>DSM 18221 / CIP 109841 / QLW-P1DMWA-1</strain>
    </source>
</reference>
<accession>A4T070</accession>
<keyword id="KW-0963">Cytoplasm</keyword>
<keyword id="KW-0378">Hydrolase</keyword>
<keyword id="KW-1185">Reference proteome</keyword>
<keyword id="KW-0694">RNA-binding</keyword>
<keyword id="KW-0820">tRNA-binding</keyword>
<comment type="function">
    <text evidence="1">Hydrolyzes ribosome-free peptidyl-tRNAs (with 1 or more amino acids incorporated), which drop off the ribosome during protein synthesis, or as a result of ribosome stalling.</text>
</comment>
<comment type="function">
    <text evidence="1">Catalyzes the release of premature peptidyl moieties from peptidyl-tRNA molecules trapped in stalled 50S ribosomal subunits, and thus maintains levels of free tRNAs and 50S ribosomes.</text>
</comment>
<comment type="catalytic activity">
    <reaction evidence="1">
        <text>an N-acyl-L-alpha-aminoacyl-tRNA + H2O = an N-acyl-L-amino acid + a tRNA + H(+)</text>
        <dbReference type="Rhea" id="RHEA:54448"/>
        <dbReference type="Rhea" id="RHEA-COMP:10123"/>
        <dbReference type="Rhea" id="RHEA-COMP:13883"/>
        <dbReference type="ChEBI" id="CHEBI:15377"/>
        <dbReference type="ChEBI" id="CHEBI:15378"/>
        <dbReference type="ChEBI" id="CHEBI:59874"/>
        <dbReference type="ChEBI" id="CHEBI:78442"/>
        <dbReference type="ChEBI" id="CHEBI:138191"/>
        <dbReference type="EC" id="3.1.1.29"/>
    </reaction>
</comment>
<comment type="subunit">
    <text evidence="1">Monomer.</text>
</comment>
<comment type="subcellular location">
    <subcellularLocation>
        <location evidence="1">Cytoplasm</location>
    </subcellularLocation>
</comment>
<comment type="similarity">
    <text evidence="1">Belongs to the PTH family.</text>
</comment>
<feature type="chain" id="PRO_1000092968" description="Peptidyl-tRNA hydrolase">
    <location>
        <begin position="1"/>
        <end position="196"/>
    </location>
</feature>
<feature type="active site" description="Proton acceptor" evidence="1">
    <location>
        <position position="20"/>
    </location>
</feature>
<feature type="binding site" evidence="1">
    <location>
        <position position="15"/>
    </location>
    <ligand>
        <name>tRNA</name>
        <dbReference type="ChEBI" id="CHEBI:17843"/>
    </ligand>
</feature>
<feature type="binding site" evidence="1">
    <location>
        <position position="66"/>
    </location>
    <ligand>
        <name>tRNA</name>
        <dbReference type="ChEBI" id="CHEBI:17843"/>
    </ligand>
</feature>
<feature type="binding site" evidence="1">
    <location>
        <position position="68"/>
    </location>
    <ligand>
        <name>tRNA</name>
        <dbReference type="ChEBI" id="CHEBI:17843"/>
    </ligand>
</feature>
<feature type="binding site" evidence="1">
    <location>
        <position position="114"/>
    </location>
    <ligand>
        <name>tRNA</name>
        <dbReference type="ChEBI" id="CHEBI:17843"/>
    </ligand>
</feature>
<feature type="site" description="Discriminates between blocked and unblocked aminoacyl-tRNA" evidence="1">
    <location>
        <position position="10"/>
    </location>
</feature>
<feature type="site" description="Stabilizes the basic form of H active site to accept a proton" evidence="1">
    <location>
        <position position="93"/>
    </location>
</feature>
<proteinExistence type="inferred from homology"/>
<gene>
    <name evidence="1" type="primary">pth</name>
    <name type="ordered locus">Pnuc_1922</name>
</gene>
<sequence>MTKLIVGLGNPGEEHTEDRHNAGFWFLDVLAKQLNSRFESEKRFHGKVAKAKWEGEDLFLLKPSTYMNLSGQSVGALCRFHKITPAEILVVQDELDLKPGTARLKLGGGTGGHNGLKDIQAHLSTPEYWRLRLGIGHPRDLAGDGRPMDVADYVLRRPQLAEQKMIDASIENGLQILPLFLKGDTQTAMMELHSKA</sequence>